<name>ALKB_CAUVC</name>
<accession>P0CAT7</accession>
<accession>O05725</accession>
<dbReference type="EC" id="1.14.11.33"/>
<dbReference type="EMBL" id="AE005673">
    <property type="protein sequence ID" value="AAK21997.1"/>
    <property type="molecule type" value="Genomic_DNA"/>
</dbReference>
<dbReference type="PIR" id="A87250">
    <property type="entry name" value="A87250"/>
</dbReference>
<dbReference type="RefSeq" id="NP_418829.1">
    <property type="nucleotide sequence ID" value="NC_002696.2"/>
</dbReference>
<dbReference type="SMR" id="P0CAT7"/>
<dbReference type="STRING" id="190650.CC_0009"/>
<dbReference type="EnsemblBacteria" id="AAK21997">
    <property type="protein sequence ID" value="AAK21997"/>
    <property type="gene ID" value="CC_0009"/>
</dbReference>
<dbReference type="KEGG" id="ccr:CC_0009"/>
<dbReference type="PATRIC" id="fig|190650.5.peg.9"/>
<dbReference type="eggNOG" id="COG3145">
    <property type="taxonomic scope" value="Bacteria"/>
</dbReference>
<dbReference type="HOGENOM" id="CLU_039677_1_0_5"/>
<dbReference type="BioCyc" id="CAULO:CC0009-MONOMER"/>
<dbReference type="Proteomes" id="UP000001816">
    <property type="component" value="Chromosome"/>
</dbReference>
<dbReference type="GO" id="GO:0005737">
    <property type="term" value="C:cytoplasm"/>
    <property type="evidence" value="ECO:0007669"/>
    <property type="project" value="TreeGrafter"/>
</dbReference>
<dbReference type="GO" id="GO:0035516">
    <property type="term" value="F:broad specificity oxidative DNA demethylase activity"/>
    <property type="evidence" value="ECO:0007669"/>
    <property type="project" value="UniProtKB-EC"/>
</dbReference>
<dbReference type="GO" id="GO:0008198">
    <property type="term" value="F:ferrous iron binding"/>
    <property type="evidence" value="ECO:0007669"/>
    <property type="project" value="TreeGrafter"/>
</dbReference>
<dbReference type="GO" id="GO:0035515">
    <property type="term" value="F:oxidative RNA demethylase activity"/>
    <property type="evidence" value="ECO:0007669"/>
    <property type="project" value="TreeGrafter"/>
</dbReference>
<dbReference type="GO" id="GO:0006281">
    <property type="term" value="P:DNA repair"/>
    <property type="evidence" value="ECO:0007669"/>
    <property type="project" value="UniProtKB-KW"/>
</dbReference>
<dbReference type="GO" id="GO:0035513">
    <property type="term" value="P:oxidative RNA demethylation"/>
    <property type="evidence" value="ECO:0007669"/>
    <property type="project" value="TreeGrafter"/>
</dbReference>
<dbReference type="Gene3D" id="2.60.120.590">
    <property type="entry name" value="Alpha-ketoglutarate-dependent dioxygenase AlkB-like"/>
    <property type="match status" value="1"/>
</dbReference>
<dbReference type="InterPro" id="IPR004574">
    <property type="entry name" value="Alkb"/>
</dbReference>
<dbReference type="InterPro" id="IPR027450">
    <property type="entry name" value="AlkB-like"/>
</dbReference>
<dbReference type="InterPro" id="IPR037151">
    <property type="entry name" value="AlkB-like_sf"/>
</dbReference>
<dbReference type="InterPro" id="IPR005123">
    <property type="entry name" value="Oxoglu/Fe-dep_dioxygenase_dom"/>
</dbReference>
<dbReference type="PANTHER" id="PTHR16557">
    <property type="entry name" value="ALKYLATED DNA REPAIR PROTEIN ALKB-RELATED"/>
    <property type="match status" value="1"/>
</dbReference>
<dbReference type="PANTHER" id="PTHR16557:SF2">
    <property type="entry name" value="NUCLEIC ACID DIOXYGENASE ALKBH1"/>
    <property type="match status" value="1"/>
</dbReference>
<dbReference type="Pfam" id="PF13532">
    <property type="entry name" value="2OG-FeII_Oxy_2"/>
    <property type="match status" value="1"/>
</dbReference>
<dbReference type="SUPFAM" id="SSF51197">
    <property type="entry name" value="Clavaminate synthase-like"/>
    <property type="match status" value="1"/>
</dbReference>
<dbReference type="PROSITE" id="PS51471">
    <property type="entry name" value="FE2OG_OXY"/>
    <property type="match status" value="1"/>
</dbReference>
<comment type="function">
    <text evidence="1">Dioxygenase that repairs alkylated DNA and RNA containing 3-methylcytosine or 1-methyladenine by oxidative demethylation. Has highest activity towards 3-methylcytosine. Has lower activity towards alkylated DNA containing ethenoadenine, and no detectable activity towards 1-methylguanine or 3-methylthymine. Accepts double-stranded and single-stranded substrates. Requires molecular oxygen, alpha-ketoglutarate and iron. Provides extensive resistance to alkylating agents such as MMS and DMS (SN2 agents), but not to MMNG and MNU (SN1 agents) (By similarity).</text>
</comment>
<comment type="catalytic activity">
    <reaction>
        <text>a methylated nucleobase within DNA + 2-oxoglutarate + O2 = a nucleobase within DNA + formaldehyde + succinate + CO2</text>
        <dbReference type="Rhea" id="RHEA:30299"/>
        <dbReference type="Rhea" id="RHEA-COMP:12192"/>
        <dbReference type="Rhea" id="RHEA-COMP:12193"/>
        <dbReference type="ChEBI" id="CHEBI:15379"/>
        <dbReference type="ChEBI" id="CHEBI:16526"/>
        <dbReference type="ChEBI" id="CHEBI:16810"/>
        <dbReference type="ChEBI" id="CHEBI:16842"/>
        <dbReference type="ChEBI" id="CHEBI:30031"/>
        <dbReference type="ChEBI" id="CHEBI:32875"/>
        <dbReference type="ChEBI" id="CHEBI:64428"/>
        <dbReference type="EC" id="1.14.11.33"/>
    </reaction>
</comment>
<comment type="cofactor">
    <cofactor evidence="2">
        <name>Fe(2+)</name>
        <dbReference type="ChEBI" id="CHEBI:29033"/>
    </cofactor>
    <text evidence="2">Binds 1 Fe(2+) ion per subunit.</text>
</comment>
<comment type="similarity">
    <text evidence="3">Belongs to the alkB family.</text>
</comment>
<protein>
    <recommendedName>
        <fullName>Alpha-ketoglutarate-dependent dioxygenase AlkB homolog</fullName>
        <ecNumber>1.14.11.33</ecNumber>
    </recommendedName>
    <alternativeName>
        <fullName>DNA oxidative demethylase AlkB</fullName>
    </alternativeName>
</protein>
<keyword id="KW-0223">Dioxygenase</keyword>
<keyword id="KW-0227">DNA damage</keyword>
<keyword id="KW-0234">DNA repair</keyword>
<keyword id="KW-0408">Iron</keyword>
<keyword id="KW-0479">Metal-binding</keyword>
<keyword id="KW-0560">Oxidoreductase</keyword>
<keyword id="KW-1185">Reference proteome</keyword>
<gene>
    <name type="primary">alkB</name>
    <name type="ordered locus">CC_0009</name>
</gene>
<evidence type="ECO:0000250" key="1"/>
<evidence type="ECO:0000255" key="2">
    <source>
        <dbReference type="PROSITE-ProRule" id="PRU00805"/>
    </source>
</evidence>
<evidence type="ECO:0000305" key="3"/>
<reference key="1">
    <citation type="journal article" date="2001" name="Proc. Natl. Acad. Sci. U.S.A.">
        <title>Complete genome sequence of Caulobacter crescentus.</title>
        <authorList>
            <person name="Nierman W.C."/>
            <person name="Feldblyum T.V."/>
            <person name="Laub M.T."/>
            <person name="Paulsen I.T."/>
            <person name="Nelson K.E."/>
            <person name="Eisen J.A."/>
            <person name="Heidelberg J.F."/>
            <person name="Alley M.R.K."/>
            <person name="Ohta N."/>
            <person name="Maddock J.R."/>
            <person name="Potocka I."/>
            <person name="Nelson W.C."/>
            <person name="Newton A."/>
            <person name="Stephens C."/>
            <person name="Phadke N.D."/>
            <person name="Ely B."/>
            <person name="DeBoy R.T."/>
            <person name="Dodson R.J."/>
            <person name="Durkin A.S."/>
            <person name="Gwinn M.L."/>
            <person name="Haft D.H."/>
            <person name="Kolonay J.F."/>
            <person name="Smit J."/>
            <person name="Craven M.B."/>
            <person name="Khouri H.M."/>
            <person name="Shetty J."/>
            <person name="Berry K.J."/>
            <person name="Utterback T.R."/>
            <person name="Tran K."/>
            <person name="Wolf A.M."/>
            <person name="Vamathevan J.J."/>
            <person name="Ermolaeva M.D."/>
            <person name="White O."/>
            <person name="Salzberg S.L."/>
            <person name="Venter J.C."/>
            <person name="Shapiro L."/>
            <person name="Fraser C.M."/>
        </authorList>
    </citation>
    <scope>NUCLEOTIDE SEQUENCE [LARGE SCALE GENOMIC DNA]</scope>
    <source>
        <strain>ATCC 19089 / CIP 103742 / CB 15</strain>
    </source>
</reference>
<sequence>MAVVRRAVAARGLQMIAKPLTVVPGFDVWPGLLDISAQRALVEAVLAGAEQAPFSNYRTAYGKPMSVAMTALGSLGWTSDARGYRYVDRHPETGRPWPDMPPALLDLWTVLGDPETPPDSCLVNLYRDGARMGLHQDRDEADPRFPVLSISLGDTAVFRIGGVNRKDPTRSLRLASGDVCRLLGPARLAFHGVDRILPGSSSLVPGGGRINLTLRRARTA</sequence>
<proteinExistence type="inferred from homology"/>
<organism>
    <name type="scientific">Caulobacter vibrioides (strain ATCC 19089 / CIP 103742 / CB 15)</name>
    <name type="common">Caulobacter crescentus</name>
    <dbReference type="NCBI Taxonomy" id="190650"/>
    <lineage>
        <taxon>Bacteria</taxon>
        <taxon>Pseudomonadati</taxon>
        <taxon>Pseudomonadota</taxon>
        <taxon>Alphaproteobacteria</taxon>
        <taxon>Caulobacterales</taxon>
        <taxon>Caulobacteraceae</taxon>
        <taxon>Caulobacter</taxon>
    </lineage>
</organism>
<feature type="chain" id="PRO_0000066667" description="Alpha-ketoglutarate-dependent dioxygenase AlkB homolog">
    <location>
        <begin position="1"/>
        <end position="220"/>
    </location>
</feature>
<feature type="domain" description="Fe2OG dioxygenase" evidence="2">
    <location>
        <begin position="117"/>
        <end position="218"/>
    </location>
</feature>
<feature type="binding site" evidence="1">
    <location>
        <position position="77"/>
    </location>
    <ligand>
        <name>substrate</name>
    </ligand>
</feature>
<feature type="binding site" evidence="1">
    <location>
        <begin position="84"/>
        <end position="86"/>
    </location>
    <ligand>
        <name>substrate</name>
    </ligand>
</feature>
<feature type="binding site" evidence="1">
    <location>
        <begin position="124"/>
        <end position="126"/>
    </location>
    <ligand>
        <name>2-oxoglutarate</name>
        <dbReference type="ChEBI" id="CHEBI:16810"/>
    </ligand>
</feature>
<feature type="binding site" evidence="2">
    <location>
        <position position="135"/>
    </location>
    <ligand>
        <name>Fe cation</name>
        <dbReference type="ChEBI" id="CHEBI:24875"/>
        <note>catalytic</note>
    </ligand>
</feature>
<feature type="binding site" evidence="2">
    <location>
        <position position="137"/>
    </location>
    <ligand>
        <name>Fe cation</name>
        <dbReference type="ChEBI" id="CHEBI:24875"/>
        <note>catalytic</note>
    </ligand>
</feature>
<feature type="binding site" evidence="1">
    <location>
        <position position="139"/>
    </location>
    <ligand>
        <name>substrate</name>
    </ligand>
</feature>
<feature type="binding site" evidence="1">
    <location>
        <position position="165"/>
    </location>
    <ligand>
        <name>substrate</name>
    </ligand>
</feature>
<feature type="binding site" evidence="2">
    <location>
        <position position="191"/>
    </location>
    <ligand>
        <name>Fe cation</name>
        <dbReference type="ChEBI" id="CHEBI:24875"/>
        <note>catalytic</note>
    </ligand>
</feature>
<feature type="binding site" evidence="1">
    <location>
        <begin position="209"/>
        <end position="215"/>
    </location>
    <ligand>
        <name>2-oxoglutarate</name>
        <dbReference type="ChEBI" id="CHEBI:16810"/>
    </ligand>
</feature>